<accession>Q1J495</accession>
<sequence>MAKKLKKNEEITKKFGDERRKALDDALKNIEKDFGKGAVMRLGERAEQKVQVMSSGSLALDIALGAGGYPKGRIIEIYGPESSGKTTVALHAVAQAQKEGGIAAFIDAEHALDPAYAAALGVNIDELLLSQPDSGEQGLEIAGKLIDSGAVDLVVVDSVAALVPRAEIDGDIGDSHVGLQARMMSQAMRKLSASINKTKTIAIFINQLREKVGVMFGNPETTPGGRALKFYASVRLDVRGTTQIKGTGDQKDSSIGKETKIKVVKNKVAPPFKVAEVEIMYGEGISRTGELVKIASDLDIIQKAGAWFSYNGEKIGQGSENAKRYLADHPQLFDEIDRKVRVKFGLLEESEEESAMAVASEETDDLALDLDNGIEIED</sequence>
<organism>
    <name type="scientific">Streptococcus pyogenes serotype M4 (strain MGAS10750)</name>
    <dbReference type="NCBI Taxonomy" id="370554"/>
    <lineage>
        <taxon>Bacteria</taxon>
        <taxon>Bacillati</taxon>
        <taxon>Bacillota</taxon>
        <taxon>Bacilli</taxon>
        <taxon>Lactobacillales</taxon>
        <taxon>Streptococcaceae</taxon>
        <taxon>Streptococcus</taxon>
    </lineage>
</organism>
<keyword id="KW-0067">ATP-binding</keyword>
<keyword id="KW-0963">Cytoplasm</keyword>
<keyword id="KW-0227">DNA damage</keyword>
<keyword id="KW-0233">DNA recombination</keyword>
<keyword id="KW-0234">DNA repair</keyword>
<keyword id="KW-0238">DNA-binding</keyword>
<keyword id="KW-0547">Nucleotide-binding</keyword>
<keyword id="KW-0742">SOS response</keyword>
<reference key="1">
    <citation type="journal article" date="2006" name="Proc. Natl. Acad. Sci. U.S.A.">
        <title>Molecular genetic anatomy of inter- and intraserotype variation in the human bacterial pathogen group A Streptococcus.</title>
        <authorList>
            <person name="Beres S.B."/>
            <person name="Richter E.W."/>
            <person name="Nagiec M.J."/>
            <person name="Sumby P."/>
            <person name="Porcella S.F."/>
            <person name="DeLeo F.R."/>
            <person name="Musser J.M."/>
        </authorList>
    </citation>
    <scope>NUCLEOTIDE SEQUENCE [LARGE SCALE GENOMIC DNA]</scope>
    <source>
        <strain>MGAS10750</strain>
    </source>
</reference>
<proteinExistence type="inferred from homology"/>
<name>RECA_STRPF</name>
<comment type="function">
    <text evidence="1">Can catalyze the hydrolysis of ATP in the presence of single-stranded DNA, the ATP-dependent uptake of single-stranded DNA by duplex DNA, and the ATP-dependent hybridization of homologous single-stranded DNAs. It interacts with LexA causing its activation and leading to its autocatalytic cleavage.</text>
</comment>
<comment type="subcellular location">
    <subcellularLocation>
        <location evidence="1">Cytoplasm</location>
    </subcellularLocation>
</comment>
<comment type="similarity">
    <text evidence="1">Belongs to the RecA family.</text>
</comment>
<dbReference type="EMBL" id="CP000262">
    <property type="protein sequence ID" value="ABF38841.1"/>
    <property type="molecule type" value="Genomic_DNA"/>
</dbReference>
<dbReference type="SMR" id="Q1J495"/>
<dbReference type="KEGG" id="spi:MGAS10750_Spy1891"/>
<dbReference type="HOGENOM" id="CLU_040469_3_2_9"/>
<dbReference type="Proteomes" id="UP000002434">
    <property type="component" value="Chromosome"/>
</dbReference>
<dbReference type="GO" id="GO:0005829">
    <property type="term" value="C:cytosol"/>
    <property type="evidence" value="ECO:0007669"/>
    <property type="project" value="TreeGrafter"/>
</dbReference>
<dbReference type="GO" id="GO:0005524">
    <property type="term" value="F:ATP binding"/>
    <property type="evidence" value="ECO:0007669"/>
    <property type="project" value="UniProtKB-UniRule"/>
</dbReference>
<dbReference type="GO" id="GO:0016887">
    <property type="term" value="F:ATP hydrolysis activity"/>
    <property type="evidence" value="ECO:0007669"/>
    <property type="project" value="InterPro"/>
</dbReference>
<dbReference type="GO" id="GO:0140664">
    <property type="term" value="F:ATP-dependent DNA damage sensor activity"/>
    <property type="evidence" value="ECO:0007669"/>
    <property type="project" value="InterPro"/>
</dbReference>
<dbReference type="GO" id="GO:0003684">
    <property type="term" value="F:damaged DNA binding"/>
    <property type="evidence" value="ECO:0007669"/>
    <property type="project" value="UniProtKB-UniRule"/>
</dbReference>
<dbReference type="GO" id="GO:0003697">
    <property type="term" value="F:single-stranded DNA binding"/>
    <property type="evidence" value="ECO:0007669"/>
    <property type="project" value="UniProtKB-UniRule"/>
</dbReference>
<dbReference type="GO" id="GO:0006310">
    <property type="term" value="P:DNA recombination"/>
    <property type="evidence" value="ECO:0007669"/>
    <property type="project" value="UniProtKB-UniRule"/>
</dbReference>
<dbReference type="GO" id="GO:0006281">
    <property type="term" value="P:DNA repair"/>
    <property type="evidence" value="ECO:0007669"/>
    <property type="project" value="UniProtKB-UniRule"/>
</dbReference>
<dbReference type="GO" id="GO:0009432">
    <property type="term" value="P:SOS response"/>
    <property type="evidence" value="ECO:0007669"/>
    <property type="project" value="UniProtKB-UniRule"/>
</dbReference>
<dbReference type="CDD" id="cd00983">
    <property type="entry name" value="RecA"/>
    <property type="match status" value="1"/>
</dbReference>
<dbReference type="FunFam" id="3.40.50.300:FF:000087">
    <property type="entry name" value="Recombinase RecA"/>
    <property type="match status" value="1"/>
</dbReference>
<dbReference type="Gene3D" id="3.40.50.300">
    <property type="entry name" value="P-loop containing nucleotide triphosphate hydrolases"/>
    <property type="match status" value="1"/>
</dbReference>
<dbReference type="HAMAP" id="MF_00268">
    <property type="entry name" value="RecA"/>
    <property type="match status" value="1"/>
</dbReference>
<dbReference type="InterPro" id="IPR003593">
    <property type="entry name" value="AAA+_ATPase"/>
</dbReference>
<dbReference type="InterPro" id="IPR013765">
    <property type="entry name" value="DNA_recomb/repair_RecA"/>
</dbReference>
<dbReference type="InterPro" id="IPR020584">
    <property type="entry name" value="DNA_recomb/repair_RecA_CS"/>
</dbReference>
<dbReference type="InterPro" id="IPR027417">
    <property type="entry name" value="P-loop_NTPase"/>
</dbReference>
<dbReference type="InterPro" id="IPR049261">
    <property type="entry name" value="RecA-like_C"/>
</dbReference>
<dbReference type="InterPro" id="IPR049428">
    <property type="entry name" value="RecA-like_N"/>
</dbReference>
<dbReference type="InterPro" id="IPR020588">
    <property type="entry name" value="RecA_ATP-bd"/>
</dbReference>
<dbReference type="InterPro" id="IPR023400">
    <property type="entry name" value="RecA_C_sf"/>
</dbReference>
<dbReference type="InterPro" id="IPR020587">
    <property type="entry name" value="RecA_monomer-monomer_interface"/>
</dbReference>
<dbReference type="NCBIfam" id="TIGR02012">
    <property type="entry name" value="tigrfam_recA"/>
    <property type="match status" value="1"/>
</dbReference>
<dbReference type="PANTHER" id="PTHR45900:SF1">
    <property type="entry name" value="MITOCHONDRIAL DNA REPAIR PROTEIN RECA HOMOLOG-RELATED"/>
    <property type="match status" value="1"/>
</dbReference>
<dbReference type="PANTHER" id="PTHR45900">
    <property type="entry name" value="RECA"/>
    <property type="match status" value="1"/>
</dbReference>
<dbReference type="Pfam" id="PF00154">
    <property type="entry name" value="RecA"/>
    <property type="match status" value="1"/>
</dbReference>
<dbReference type="Pfam" id="PF21096">
    <property type="entry name" value="RecA_C"/>
    <property type="match status" value="1"/>
</dbReference>
<dbReference type="PRINTS" id="PR00142">
    <property type="entry name" value="RECA"/>
</dbReference>
<dbReference type="SMART" id="SM00382">
    <property type="entry name" value="AAA"/>
    <property type="match status" value="1"/>
</dbReference>
<dbReference type="SUPFAM" id="SSF52540">
    <property type="entry name" value="P-loop containing nucleoside triphosphate hydrolases"/>
    <property type="match status" value="1"/>
</dbReference>
<dbReference type="SUPFAM" id="SSF54752">
    <property type="entry name" value="RecA protein, C-terminal domain"/>
    <property type="match status" value="1"/>
</dbReference>
<dbReference type="PROSITE" id="PS00321">
    <property type="entry name" value="RECA_1"/>
    <property type="match status" value="1"/>
</dbReference>
<dbReference type="PROSITE" id="PS50162">
    <property type="entry name" value="RECA_2"/>
    <property type="match status" value="1"/>
</dbReference>
<dbReference type="PROSITE" id="PS50163">
    <property type="entry name" value="RECA_3"/>
    <property type="match status" value="1"/>
</dbReference>
<protein>
    <recommendedName>
        <fullName evidence="1">Protein RecA</fullName>
    </recommendedName>
    <alternativeName>
        <fullName evidence="1">Recombinase A</fullName>
    </alternativeName>
</protein>
<evidence type="ECO:0000255" key="1">
    <source>
        <dbReference type="HAMAP-Rule" id="MF_00268"/>
    </source>
</evidence>
<gene>
    <name evidence="1" type="primary">recA</name>
    <name type="ordered locus">MGAS10750_Spy1891</name>
</gene>
<feature type="chain" id="PRO_1000048014" description="Protein RecA">
    <location>
        <begin position="1"/>
        <end position="378"/>
    </location>
</feature>
<feature type="binding site" evidence="1">
    <location>
        <begin position="79"/>
        <end position="86"/>
    </location>
    <ligand>
        <name>ATP</name>
        <dbReference type="ChEBI" id="CHEBI:30616"/>
    </ligand>
</feature>